<protein>
    <recommendedName>
        <fullName>Sapecin-B</fullName>
    </recommendedName>
</protein>
<accession>P31529</accession>
<reference key="1">
    <citation type="journal article" date="1995" name="FEBS Lett.">
        <title>Molecular cloning of cDNA for sapecin B, an antibacterial protein of Sarcophaga, and its detection in larval brain.</title>
        <authorList>
            <person name="Lee S.-R."/>
            <person name="Kurata S."/>
            <person name="Natori S."/>
        </authorList>
    </citation>
    <scope>NUCLEOTIDE SEQUENCE [MRNA]</scope>
</reference>
<reference key="2">
    <citation type="journal article" date="1993" name="Biochem. J.">
        <title>Purification, sequence and antibacterial activity of two novel sapecin homologues from Sarcophaga embryonic cells: similarity of sapecin B to charybdotoxin.</title>
        <authorList>
            <person name="Yamada K."/>
            <person name="Natori S."/>
        </authorList>
    </citation>
    <scope>PROTEIN SEQUENCE OF 55-88</scope>
    <scope>DISULFIDE BONDS</scope>
</reference>
<keyword id="KW-0044">Antibiotic</keyword>
<keyword id="KW-0929">Antimicrobial</keyword>
<keyword id="KW-0165">Cleavage on pair of basic residues</keyword>
<keyword id="KW-0211">Defensin</keyword>
<keyword id="KW-0903">Direct protein sequencing</keyword>
<keyword id="KW-1015">Disulfide bond</keyword>
<keyword id="KW-0391">Immunity</keyword>
<keyword id="KW-0399">Innate immunity</keyword>
<keyword id="KW-0964">Secreted</keyword>
<keyword id="KW-0732">Signal</keyword>
<proteinExistence type="evidence at protein level"/>
<feature type="signal peptide" evidence="1">
    <location>
        <begin position="1"/>
        <end position="24"/>
    </location>
</feature>
<feature type="propeptide" id="PRO_0000006758" evidence="3">
    <location>
        <begin position="25"/>
        <end position="54"/>
    </location>
</feature>
<feature type="peptide" id="PRO_0000006759" description="Sapecin-B">
    <location>
        <begin position="55"/>
        <end position="88"/>
    </location>
</feature>
<feature type="disulfide bond" evidence="2 3">
    <location>
        <begin position="57"/>
        <end position="78"/>
    </location>
</feature>
<feature type="disulfide bond" evidence="2 3">
    <location>
        <begin position="64"/>
        <end position="84"/>
    </location>
</feature>
<feature type="disulfide bond" evidence="2 3">
    <location>
        <begin position="68"/>
        <end position="86"/>
    </location>
</feature>
<sequence length="88" mass="10041">MKFLTSLLLLFVVVMVSAVNLSMAKESANQLTERLQELDGAAIQEPAELNRHKRLTCEIDRSLCLLHCRLKGYLRAYCSQQKVCRCVQ</sequence>
<name>SAPB_SARPE</name>
<evidence type="ECO:0000255" key="1"/>
<evidence type="ECO:0000255" key="2">
    <source>
        <dbReference type="PROSITE-ProRule" id="PRU00710"/>
    </source>
</evidence>
<evidence type="ECO:0000269" key="3">
    <source>
    </source>
</evidence>
<comment type="function">
    <text>Sapecins, which are potent bactericidal proteins, are produced in response to injury. Sapecin B is cytotoxic to Gram-positive bacteria.</text>
</comment>
<comment type="subcellular location">
    <subcellularLocation>
        <location>Secreted</location>
    </subcellularLocation>
</comment>
<comment type="tissue specificity">
    <text>Hemocytes and fat body.</text>
</comment>
<comment type="induction">
    <text>By injury to the larval cell wall.</text>
</comment>
<comment type="similarity">
    <text evidence="2">Belongs to the invertebrate defensin family. Type 1 subfamily.</text>
</comment>
<dbReference type="EMBL" id="S80571">
    <property type="protein sequence ID" value="AAB35004.1"/>
    <property type="molecule type" value="mRNA"/>
</dbReference>
<dbReference type="PIR" id="S66287">
    <property type="entry name" value="S66287"/>
</dbReference>
<dbReference type="SMR" id="P31529"/>
<dbReference type="GO" id="GO:0005576">
    <property type="term" value="C:extracellular region"/>
    <property type="evidence" value="ECO:0007669"/>
    <property type="project" value="UniProtKB-SubCell"/>
</dbReference>
<dbReference type="GO" id="GO:0042742">
    <property type="term" value="P:defense response to bacterium"/>
    <property type="evidence" value="ECO:0007669"/>
    <property type="project" value="UniProtKB-KW"/>
</dbReference>
<dbReference type="GO" id="GO:0045087">
    <property type="term" value="P:innate immune response"/>
    <property type="evidence" value="ECO:0007669"/>
    <property type="project" value="UniProtKB-KW"/>
</dbReference>
<dbReference type="InterPro" id="IPR001542">
    <property type="entry name" value="Defensin_invertebrate/fungal"/>
</dbReference>
<dbReference type="Pfam" id="PF01097">
    <property type="entry name" value="Defensin_2"/>
    <property type="match status" value="1"/>
</dbReference>
<dbReference type="PROSITE" id="PS51378">
    <property type="entry name" value="INVERT_DEFENSINS"/>
    <property type="match status" value="1"/>
</dbReference>
<organism>
    <name type="scientific">Sarcophaga peregrina</name>
    <name type="common">Flesh fly</name>
    <name type="synonym">Boettcherisca peregrina</name>
    <dbReference type="NCBI Taxonomy" id="7386"/>
    <lineage>
        <taxon>Eukaryota</taxon>
        <taxon>Metazoa</taxon>
        <taxon>Ecdysozoa</taxon>
        <taxon>Arthropoda</taxon>
        <taxon>Hexapoda</taxon>
        <taxon>Insecta</taxon>
        <taxon>Pterygota</taxon>
        <taxon>Neoptera</taxon>
        <taxon>Endopterygota</taxon>
        <taxon>Diptera</taxon>
        <taxon>Brachycera</taxon>
        <taxon>Muscomorpha</taxon>
        <taxon>Oestroidea</taxon>
        <taxon>Sarcophagidae</taxon>
        <taxon>Sarcophaga</taxon>
        <taxon>Boettcherisca</taxon>
    </lineage>
</organism>